<sequence length="336" mass="37221">MIEADRLISADAIPEEEFLDRAMRPKLLNEYVGQPQVREQMEIFIQAARKRGDALDHLLIFGPPGLGKTTLANIVANEMGVNMRTTSGPVLEKAGDLAALLTNLEPHDVLFIDEIHRLSPVVEEVLYPAMEDYQLDIMIGEGPAARSIKLDLPPFTLIGATTRAGSLTSPLRDRFGIVQRLEFYNVADLQYIVGRSAQCLGLDLTPEGSLEVARRARGTPRIANRLLRRVRDFSEVKSEGAITGVVATQALDMLAVDTEGFDYMDRKLLLAIIDKFMGGPVGLDNLAAAIGEERETIEDVLEPFLIQQGFIQRTPRGRMATQHAYRHFGLTREDLG</sequence>
<organism>
    <name type="scientific">Pectobacterium carotovorum subsp. carotovorum (strain PC1)</name>
    <dbReference type="NCBI Taxonomy" id="561230"/>
    <lineage>
        <taxon>Bacteria</taxon>
        <taxon>Pseudomonadati</taxon>
        <taxon>Pseudomonadota</taxon>
        <taxon>Gammaproteobacteria</taxon>
        <taxon>Enterobacterales</taxon>
        <taxon>Pectobacteriaceae</taxon>
        <taxon>Pectobacterium</taxon>
    </lineage>
</organism>
<feature type="chain" id="PRO_1000201842" description="Holliday junction branch migration complex subunit RuvB">
    <location>
        <begin position="1"/>
        <end position="336"/>
    </location>
</feature>
<feature type="region of interest" description="Large ATPase domain (RuvB-L)" evidence="1">
    <location>
        <begin position="4"/>
        <end position="184"/>
    </location>
</feature>
<feature type="region of interest" description="Small ATPAse domain (RuvB-S)" evidence="1">
    <location>
        <begin position="185"/>
        <end position="255"/>
    </location>
</feature>
<feature type="region of interest" description="Head domain (RuvB-H)" evidence="1">
    <location>
        <begin position="258"/>
        <end position="336"/>
    </location>
</feature>
<feature type="binding site" evidence="1">
    <location>
        <position position="24"/>
    </location>
    <ligand>
        <name>ATP</name>
        <dbReference type="ChEBI" id="CHEBI:30616"/>
    </ligand>
</feature>
<feature type="binding site" evidence="1">
    <location>
        <position position="65"/>
    </location>
    <ligand>
        <name>ATP</name>
        <dbReference type="ChEBI" id="CHEBI:30616"/>
    </ligand>
</feature>
<feature type="binding site" evidence="1">
    <location>
        <position position="68"/>
    </location>
    <ligand>
        <name>ATP</name>
        <dbReference type="ChEBI" id="CHEBI:30616"/>
    </ligand>
</feature>
<feature type="binding site" evidence="1">
    <location>
        <position position="69"/>
    </location>
    <ligand>
        <name>ATP</name>
        <dbReference type="ChEBI" id="CHEBI:30616"/>
    </ligand>
</feature>
<feature type="binding site" evidence="1">
    <location>
        <position position="69"/>
    </location>
    <ligand>
        <name>Mg(2+)</name>
        <dbReference type="ChEBI" id="CHEBI:18420"/>
    </ligand>
</feature>
<feature type="binding site" evidence="1">
    <location>
        <position position="70"/>
    </location>
    <ligand>
        <name>ATP</name>
        <dbReference type="ChEBI" id="CHEBI:30616"/>
    </ligand>
</feature>
<feature type="binding site" evidence="1">
    <location>
        <begin position="131"/>
        <end position="133"/>
    </location>
    <ligand>
        <name>ATP</name>
        <dbReference type="ChEBI" id="CHEBI:30616"/>
    </ligand>
</feature>
<feature type="binding site" evidence="1">
    <location>
        <position position="174"/>
    </location>
    <ligand>
        <name>ATP</name>
        <dbReference type="ChEBI" id="CHEBI:30616"/>
    </ligand>
</feature>
<feature type="binding site" evidence="1">
    <location>
        <position position="184"/>
    </location>
    <ligand>
        <name>ATP</name>
        <dbReference type="ChEBI" id="CHEBI:30616"/>
    </ligand>
</feature>
<feature type="binding site" evidence="1">
    <location>
        <position position="221"/>
    </location>
    <ligand>
        <name>ATP</name>
        <dbReference type="ChEBI" id="CHEBI:30616"/>
    </ligand>
</feature>
<feature type="binding site" evidence="1">
    <location>
        <position position="294"/>
    </location>
    <ligand>
        <name>DNA</name>
        <dbReference type="ChEBI" id="CHEBI:16991"/>
    </ligand>
</feature>
<feature type="binding site" evidence="1">
    <location>
        <position position="313"/>
    </location>
    <ligand>
        <name>DNA</name>
        <dbReference type="ChEBI" id="CHEBI:16991"/>
    </ligand>
</feature>
<feature type="binding site" evidence="1">
    <location>
        <position position="318"/>
    </location>
    <ligand>
        <name>DNA</name>
        <dbReference type="ChEBI" id="CHEBI:16991"/>
    </ligand>
</feature>
<protein>
    <recommendedName>
        <fullName evidence="1">Holliday junction branch migration complex subunit RuvB</fullName>
        <ecNumber evidence="1">3.6.4.-</ecNumber>
    </recommendedName>
</protein>
<dbReference type="EC" id="3.6.4.-" evidence="1"/>
<dbReference type="EMBL" id="CP001657">
    <property type="protein sequence ID" value="ACT12861.1"/>
    <property type="molecule type" value="Genomic_DNA"/>
</dbReference>
<dbReference type="RefSeq" id="WP_015840065.1">
    <property type="nucleotide sequence ID" value="NC_012917.1"/>
</dbReference>
<dbReference type="SMR" id="C6DFF2"/>
<dbReference type="STRING" id="561230.PC1_1820"/>
<dbReference type="GeneID" id="67793822"/>
<dbReference type="KEGG" id="pct:PC1_1820"/>
<dbReference type="eggNOG" id="COG2255">
    <property type="taxonomic scope" value="Bacteria"/>
</dbReference>
<dbReference type="HOGENOM" id="CLU_055599_1_0_6"/>
<dbReference type="OrthoDB" id="9804478at2"/>
<dbReference type="Proteomes" id="UP000002736">
    <property type="component" value="Chromosome"/>
</dbReference>
<dbReference type="GO" id="GO:0005737">
    <property type="term" value="C:cytoplasm"/>
    <property type="evidence" value="ECO:0007669"/>
    <property type="project" value="UniProtKB-SubCell"/>
</dbReference>
<dbReference type="GO" id="GO:0048476">
    <property type="term" value="C:Holliday junction resolvase complex"/>
    <property type="evidence" value="ECO:0007669"/>
    <property type="project" value="UniProtKB-UniRule"/>
</dbReference>
<dbReference type="GO" id="GO:0005524">
    <property type="term" value="F:ATP binding"/>
    <property type="evidence" value="ECO:0007669"/>
    <property type="project" value="UniProtKB-UniRule"/>
</dbReference>
<dbReference type="GO" id="GO:0016887">
    <property type="term" value="F:ATP hydrolysis activity"/>
    <property type="evidence" value="ECO:0007669"/>
    <property type="project" value="InterPro"/>
</dbReference>
<dbReference type="GO" id="GO:0000400">
    <property type="term" value="F:four-way junction DNA binding"/>
    <property type="evidence" value="ECO:0007669"/>
    <property type="project" value="UniProtKB-UniRule"/>
</dbReference>
<dbReference type="GO" id="GO:0009378">
    <property type="term" value="F:four-way junction helicase activity"/>
    <property type="evidence" value="ECO:0007669"/>
    <property type="project" value="InterPro"/>
</dbReference>
<dbReference type="GO" id="GO:0006310">
    <property type="term" value="P:DNA recombination"/>
    <property type="evidence" value="ECO:0007669"/>
    <property type="project" value="UniProtKB-UniRule"/>
</dbReference>
<dbReference type="GO" id="GO:0006281">
    <property type="term" value="P:DNA repair"/>
    <property type="evidence" value="ECO:0007669"/>
    <property type="project" value="UniProtKB-UniRule"/>
</dbReference>
<dbReference type="CDD" id="cd00009">
    <property type="entry name" value="AAA"/>
    <property type="match status" value="1"/>
</dbReference>
<dbReference type="FunFam" id="1.10.10.10:FF:000086">
    <property type="entry name" value="Holliday junction ATP-dependent DNA helicase RuvB"/>
    <property type="match status" value="1"/>
</dbReference>
<dbReference type="FunFam" id="1.10.8.60:FF:000023">
    <property type="entry name" value="Holliday junction ATP-dependent DNA helicase RuvB"/>
    <property type="match status" value="1"/>
</dbReference>
<dbReference type="FunFam" id="3.40.50.300:FF:000073">
    <property type="entry name" value="Holliday junction ATP-dependent DNA helicase RuvB"/>
    <property type="match status" value="1"/>
</dbReference>
<dbReference type="Gene3D" id="1.10.8.60">
    <property type="match status" value="1"/>
</dbReference>
<dbReference type="Gene3D" id="3.40.50.300">
    <property type="entry name" value="P-loop containing nucleotide triphosphate hydrolases"/>
    <property type="match status" value="1"/>
</dbReference>
<dbReference type="Gene3D" id="1.10.10.10">
    <property type="entry name" value="Winged helix-like DNA-binding domain superfamily/Winged helix DNA-binding domain"/>
    <property type="match status" value="1"/>
</dbReference>
<dbReference type="HAMAP" id="MF_00016">
    <property type="entry name" value="DNA_HJ_migration_RuvB"/>
    <property type="match status" value="1"/>
</dbReference>
<dbReference type="InterPro" id="IPR003593">
    <property type="entry name" value="AAA+_ATPase"/>
</dbReference>
<dbReference type="InterPro" id="IPR041445">
    <property type="entry name" value="AAA_lid_4"/>
</dbReference>
<dbReference type="InterPro" id="IPR004605">
    <property type="entry name" value="DNA_helicase_Holl-junc_RuvB"/>
</dbReference>
<dbReference type="InterPro" id="IPR027417">
    <property type="entry name" value="P-loop_NTPase"/>
</dbReference>
<dbReference type="InterPro" id="IPR008824">
    <property type="entry name" value="RuvB-like_N"/>
</dbReference>
<dbReference type="InterPro" id="IPR008823">
    <property type="entry name" value="RuvB_C"/>
</dbReference>
<dbReference type="InterPro" id="IPR036388">
    <property type="entry name" value="WH-like_DNA-bd_sf"/>
</dbReference>
<dbReference type="InterPro" id="IPR036390">
    <property type="entry name" value="WH_DNA-bd_sf"/>
</dbReference>
<dbReference type="NCBIfam" id="NF000868">
    <property type="entry name" value="PRK00080.1"/>
    <property type="match status" value="1"/>
</dbReference>
<dbReference type="NCBIfam" id="TIGR00635">
    <property type="entry name" value="ruvB"/>
    <property type="match status" value="1"/>
</dbReference>
<dbReference type="PANTHER" id="PTHR42848">
    <property type="match status" value="1"/>
</dbReference>
<dbReference type="PANTHER" id="PTHR42848:SF1">
    <property type="entry name" value="HOLLIDAY JUNCTION BRANCH MIGRATION COMPLEX SUBUNIT RUVB"/>
    <property type="match status" value="1"/>
</dbReference>
<dbReference type="Pfam" id="PF17864">
    <property type="entry name" value="AAA_lid_4"/>
    <property type="match status" value="1"/>
</dbReference>
<dbReference type="Pfam" id="PF05491">
    <property type="entry name" value="RuvB_C"/>
    <property type="match status" value="1"/>
</dbReference>
<dbReference type="Pfam" id="PF05496">
    <property type="entry name" value="RuvB_N"/>
    <property type="match status" value="1"/>
</dbReference>
<dbReference type="SMART" id="SM00382">
    <property type="entry name" value="AAA"/>
    <property type="match status" value="1"/>
</dbReference>
<dbReference type="SUPFAM" id="SSF52540">
    <property type="entry name" value="P-loop containing nucleoside triphosphate hydrolases"/>
    <property type="match status" value="1"/>
</dbReference>
<dbReference type="SUPFAM" id="SSF46785">
    <property type="entry name" value="Winged helix' DNA-binding domain"/>
    <property type="match status" value="1"/>
</dbReference>
<comment type="function">
    <text evidence="1">The RuvA-RuvB-RuvC complex processes Holliday junction (HJ) DNA during genetic recombination and DNA repair, while the RuvA-RuvB complex plays an important role in the rescue of blocked DNA replication forks via replication fork reversal (RFR). RuvA specifically binds to HJ cruciform DNA, conferring on it an open structure. The RuvB hexamer acts as an ATP-dependent pump, pulling dsDNA into and through the RuvAB complex. RuvB forms 2 homohexamers on either side of HJ DNA bound by 1 or 2 RuvA tetramers; 4 subunits per hexamer contact DNA at a time. Coordinated motions by a converter formed by DNA-disengaged RuvB subunits stimulates ATP hydrolysis and nucleotide exchange. Immobilization of the converter enables RuvB to convert the ATP-contained energy into a lever motion, pulling 2 nucleotides of DNA out of the RuvA tetramer per ATP hydrolyzed, thus driving DNA branch migration. The RuvB motors rotate together with the DNA substrate, which together with the progressing nucleotide cycle form the mechanistic basis for DNA recombination by continuous HJ branch migration. Branch migration allows RuvC to scan DNA until it finds its consensus sequence, where it cleaves and resolves cruciform DNA.</text>
</comment>
<comment type="catalytic activity">
    <reaction evidence="1">
        <text>ATP + H2O = ADP + phosphate + H(+)</text>
        <dbReference type="Rhea" id="RHEA:13065"/>
        <dbReference type="ChEBI" id="CHEBI:15377"/>
        <dbReference type="ChEBI" id="CHEBI:15378"/>
        <dbReference type="ChEBI" id="CHEBI:30616"/>
        <dbReference type="ChEBI" id="CHEBI:43474"/>
        <dbReference type="ChEBI" id="CHEBI:456216"/>
    </reaction>
</comment>
<comment type="subunit">
    <text evidence="1">Homohexamer. Forms an RuvA(8)-RuvB(12)-Holliday junction (HJ) complex. HJ DNA is sandwiched between 2 RuvA tetramers; dsDNA enters through RuvA and exits via RuvB. An RuvB hexamer assembles on each DNA strand where it exits the tetramer. Each RuvB hexamer is contacted by two RuvA subunits (via domain III) on 2 adjacent RuvB subunits; this complex drives branch migration. In the full resolvosome a probable DNA-RuvA(4)-RuvB(12)-RuvC(2) complex forms which resolves the HJ.</text>
</comment>
<comment type="subcellular location">
    <subcellularLocation>
        <location evidence="1">Cytoplasm</location>
    </subcellularLocation>
</comment>
<comment type="domain">
    <text evidence="1">Has 3 domains, the large (RuvB-L) and small ATPase (RuvB-S) domains and the C-terminal head (RuvB-H) domain. The head domain binds DNA, while the ATPase domains jointly bind ATP, ADP or are empty depending on the state of the subunit in the translocation cycle. During a single DNA translocation step the structure of each domain remains the same, but their relative positions change.</text>
</comment>
<comment type="similarity">
    <text evidence="1">Belongs to the RuvB family.</text>
</comment>
<accession>C6DFF2</accession>
<keyword id="KW-0067">ATP-binding</keyword>
<keyword id="KW-0963">Cytoplasm</keyword>
<keyword id="KW-0227">DNA damage</keyword>
<keyword id="KW-0233">DNA recombination</keyword>
<keyword id="KW-0234">DNA repair</keyword>
<keyword id="KW-0238">DNA-binding</keyword>
<keyword id="KW-0378">Hydrolase</keyword>
<keyword id="KW-0547">Nucleotide-binding</keyword>
<name>RUVB_PECCP</name>
<evidence type="ECO:0000255" key="1">
    <source>
        <dbReference type="HAMAP-Rule" id="MF_00016"/>
    </source>
</evidence>
<reference key="1">
    <citation type="submission" date="2009-07" db="EMBL/GenBank/DDBJ databases">
        <title>Complete sequence of Pectobacterium carotovorum subsp. carotovorum PC1.</title>
        <authorList>
            <consortium name="US DOE Joint Genome Institute"/>
            <person name="Lucas S."/>
            <person name="Copeland A."/>
            <person name="Lapidus A."/>
            <person name="Glavina del Rio T."/>
            <person name="Tice H."/>
            <person name="Bruce D."/>
            <person name="Goodwin L."/>
            <person name="Pitluck S."/>
            <person name="Munk A.C."/>
            <person name="Brettin T."/>
            <person name="Detter J.C."/>
            <person name="Han C."/>
            <person name="Tapia R."/>
            <person name="Larimer F."/>
            <person name="Land M."/>
            <person name="Hauser L."/>
            <person name="Kyrpides N."/>
            <person name="Mikhailova N."/>
            <person name="Balakrishnan V."/>
            <person name="Glasner J."/>
            <person name="Perna N.T."/>
        </authorList>
    </citation>
    <scope>NUCLEOTIDE SEQUENCE [LARGE SCALE GENOMIC DNA]</scope>
    <source>
        <strain>PC1</strain>
    </source>
</reference>
<proteinExistence type="inferred from homology"/>
<gene>
    <name evidence="1" type="primary">ruvB</name>
    <name type="ordered locus">PC1_1820</name>
</gene>